<gene>
    <name type="ordered locus">PFL_2594</name>
</gene>
<name>RGMG_PSEF5</name>
<feature type="chain" id="PRO_0000262983" description="Putative ribose/galactose/methyl galactoside import ATP-binding protein">
    <location>
        <begin position="1"/>
        <end position="515"/>
    </location>
</feature>
<feature type="domain" description="ABC transporter 1" evidence="1">
    <location>
        <begin position="25"/>
        <end position="261"/>
    </location>
</feature>
<feature type="domain" description="ABC transporter 2" evidence="1">
    <location>
        <begin position="268"/>
        <end position="515"/>
    </location>
</feature>
<feature type="binding site" evidence="1">
    <location>
        <begin position="57"/>
        <end position="64"/>
    </location>
    <ligand>
        <name>ATP</name>
        <dbReference type="ChEBI" id="CHEBI:30616"/>
    </ligand>
</feature>
<reference key="1">
    <citation type="journal article" date="2005" name="Nat. Biotechnol.">
        <title>Complete genome sequence of the plant commensal Pseudomonas fluorescens Pf-5.</title>
        <authorList>
            <person name="Paulsen I.T."/>
            <person name="Press C.M."/>
            <person name="Ravel J."/>
            <person name="Kobayashi D.Y."/>
            <person name="Myers G.S.A."/>
            <person name="Mavrodi D.V."/>
            <person name="DeBoy R.T."/>
            <person name="Seshadri R."/>
            <person name="Ren Q."/>
            <person name="Madupu R."/>
            <person name="Dodson R.J."/>
            <person name="Durkin A.S."/>
            <person name="Brinkac L.M."/>
            <person name="Daugherty S.C."/>
            <person name="Sullivan S.A."/>
            <person name="Rosovitz M.J."/>
            <person name="Gwinn M.L."/>
            <person name="Zhou L."/>
            <person name="Schneider D.J."/>
            <person name="Cartinhour S.W."/>
            <person name="Nelson W.C."/>
            <person name="Weidman J."/>
            <person name="Watkins K."/>
            <person name="Tran K."/>
            <person name="Khouri H."/>
            <person name="Pierson E.A."/>
            <person name="Pierson L.S. III"/>
            <person name="Thomashow L.S."/>
            <person name="Loper J.E."/>
        </authorList>
    </citation>
    <scope>NUCLEOTIDE SEQUENCE [LARGE SCALE GENOMIC DNA]</scope>
    <source>
        <strain>ATCC BAA-477 / NRRL B-23932 / Pf-5</strain>
    </source>
</reference>
<sequence length="515" mass="55844">MNACASASSLHSLSPAVAPQEPYLLEVLNVSKGFPGVVALANVQLRVRPGTVLALMGENGAGKSTLMKIIAGIYQPDSGELRLKGRPVTFATPLAALQAGIAMIHQELNLMPHMSIAENIWIGREQQNRLGLIDHREMHRCTAALLARLRIELDPEEQVGNLSIAERQMVEIAKAVSYDSDVLIMDEPTSAITDKEVAHLFSIIADLKAQGKGIVYITHKMNEVFAIADEVAVFRDGAYIGLQRADSLDGDSLISMMVGRELSQLFPLREKPIGELLLKVRDLRLDGVFKGVSFDLHAGEILGIAGLMGSGRTNVAETLFGITPSDGGEIVLDGQPLRIGDPHRAIEKGLALLTEDRKLSGLFPCLSVLENMEVAVLPHYAGGGFVQQKALRALCEDMCRKLRVKTPSLEQCIDTLSGGNQQKALLARWLMTQPRILILDEPTRGIDVGAKAEIYRLIASLAGEGMAVIMISSELPEVLGMSDRVMVMHEGQLMGTLDRNEATQERVMQLASGLN</sequence>
<dbReference type="EC" id="7.5.2.11" evidence="1"/>
<dbReference type="EC" id="7.5.2.7" evidence="1"/>
<dbReference type="EMBL" id="CP000076">
    <property type="protein sequence ID" value="AAY91867.1"/>
    <property type="molecule type" value="Genomic_DNA"/>
</dbReference>
<dbReference type="RefSeq" id="WP_011060890.1">
    <property type="nucleotide sequence ID" value="NC_004129.6"/>
</dbReference>
<dbReference type="SMR" id="Q4KDI2"/>
<dbReference type="STRING" id="220664.PFL_2594"/>
<dbReference type="KEGG" id="pfl:PFL_2594"/>
<dbReference type="PATRIC" id="fig|220664.5.peg.2640"/>
<dbReference type="eggNOG" id="COG1129">
    <property type="taxonomic scope" value="Bacteria"/>
</dbReference>
<dbReference type="HOGENOM" id="CLU_000604_92_3_6"/>
<dbReference type="Proteomes" id="UP000008540">
    <property type="component" value="Chromosome"/>
</dbReference>
<dbReference type="GO" id="GO:0005886">
    <property type="term" value="C:plasma membrane"/>
    <property type="evidence" value="ECO:0007669"/>
    <property type="project" value="UniProtKB-SubCell"/>
</dbReference>
<dbReference type="GO" id="GO:0015611">
    <property type="term" value="F:ABC-type D-ribose transporter activity"/>
    <property type="evidence" value="ECO:0007669"/>
    <property type="project" value="UniProtKB-EC"/>
</dbReference>
<dbReference type="GO" id="GO:0005524">
    <property type="term" value="F:ATP binding"/>
    <property type="evidence" value="ECO:0007669"/>
    <property type="project" value="UniProtKB-KW"/>
</dbReference>
<dbReference type="GO" id="GO:0016887">
    <property type="term" value="F:ATP hydrolysis activity"/>
    <property type="evidence" value="ECO:0007669"/>
    <property type="project" value="InterPro"/>
</dbReference>
<dbReference type="CDD" id="cd03216">
    <property type="entry name" value="ABC_Carb_Monos_I"/>
    <property type="match status" value="1"/>
</dbReference>
<dbReference type="CDD" id="cd03215">
    <property type="entry name" value="ABC_Carb_Monos_II"/>
    <property type="match status" value="1"/>
</dbReference>
<dbReference type="FunFam" id="3.40.50.300:FF:000126">
    <property type="entry name" value="Galactose/methyl galactoside import ATP-binding protein MglA"/>
    <property type="match status" value="1"/>
</dbReference>
<dbReference type="FunFam" id="3.40.50.300:FF:000127">
    <property type="entry name" value="Ribose import ATP-binding protein RbsA"/>
    <property type="match status" value="1"/>
</dbReference>
<dbReference type="Gene3D" id="3.40.50.300">
    <property type="entry name" value="P-loop containing nucleotide triphosphate hydrolases"/>
    <property type="match status" value="2"/>
</dbReference>
<dbReference type="InterPro" id="IPR003593">
    <property type="entry name" value="AAA+_ATPase"/>
</dbReference>
<dbReference type="InterPro" id="IPR050107">
    <property type="entry name" value="ABC_carbohydrate_import_ATPase"/>
</dbReference>
<dbReference type="InterPro" id="IPR003439">
    <property type="entry name" value="ABC_transporter-like_ATP-bd"/>
</dbReference>
<dbReference type="InterPro" id="IPR017871">
    <property type="entry name" value="ABC_transporter-like_CS"/>
</dbReference>
<dbReference type="InterPro" id="IPR027417">
    <property type="entry name" value="P-loop_NTPase"/>
</dbReference>
<dbReference type="PANTHER" id="PTHR43790">
    <property type="entry name" value="CARBOHYDRATE TRANSPORT ATP-BINDING PROTEIN MG119-RELATED"/>
    <property type="match status" value="1"/>
</dbReference>
<dbReference type="PANTHER" id="PTHR43790:SF7">
    <property type="entry name" value="GALACTOSE_METHYL GALACTOSIDE IMPORT ATP-BINDING PROTEIN MGLA"/>
    <property type="match status" value="1"/>
</dbReference>
<dbReference type="Pfam" id="PF00005">
    <property type="entry name" value="ABC_tran"/>
    <property type="match status" value="2"/>
</dbReference>
<dbReference type="SMART" id="SM00382">
    <property type="entry name" value="AAA"/>
    <property type="match status" value="2"/>
</dbReference>
<dbReference type="SUPFAM" id="SSF52540">
    <property type="entry name" value="P-loop containing nucleoside triphosphate hydrolases"/>
    <property type="match status" value="2"/>
</dbReference>
<dbReference type="PROSITE" id="PS00211">
    <property type="entry name" value="ABC_TRANSPORTER_1"/>
    <property type="match status" value="1"/>
</dbReference>
<dbReference type="PROSITE" id="PS50893">
    <property type="entry name" value="ABC_TRANSPORTER_2"/>
    <property type="match status" value="2"/>
</dbReference>
<dbReference type="PROSITE" id="PS51260">
    <property type="entry name" value="MGLA"/>
    <property type="match status" value="1"/>
</dbReference>
<dbReference type="PROSITE" id="PS51254">
    <property type="entry name" value="RBSA"/>
    <property type="match status" value="1"/>
</dbReference>
<proteinExistence type="inferred from homology"/>
<keyword id="KW-0067">ATP-binding</keyword>
<keyword id="KW-0997">Cell inner membrane</keyword>
<keyword id="KW-1003">Cell membrane</keyword>
<keyword id="KW-0472">Membrane</keyword>
<keyword id="KW-0547">Nucleotide-binding</keyword>
<keyword id="KW-0677">Repeat</keyword>
<keyword id="KW-0762">Sugar transport</keyword>
<keyword id="KW-1278">Translocase</keyword>
<keyword id="KW-0813">Transport</keyword>
<protein>
    <recommendedName>
        <fullName evidence="1">Putative ribose/galactose/methyl galactoside import ATP-binding protein</fullName>
        <ecNumber evidence="1">7.5.2.11</ecNumber>
        <ecNumber evidence="1">7.5.2.7</ecNumber>
    </recommendedName>
</protein>
<accession>Q4KDI2</accession>
<evidence type="ECO:0000255" key="1">
    <source>
        <dbReference type="HAMAP-Rule" id="MF_01717"/>
    </source>
</evidence>
<comment type="function">
    <text evidence="1">Part of an ABC transporter complex involved in carbohydrate import. Could be involved in ribose, galactose and/or methyl galactoside import. Responsible for energy coupling to the transport system.</text>
</comment>
<comment type="catalytic activity">
    <reaction evidence="1">
        <text>D-ribose(out) + ATP + H2O = D-ribose(in) + ADP + phosphate + H(+)</text>
        <dbReference type="Rhea" id="RHEA:29903"/>
        <dbReference type="ChEBI" id="CHEBI:15377"/>
        <dbReference type="ChEBI" id="CHEBI:15378"/>
        <dbReference type="ChEBI" id="CHEBI:30616"/>
        <dbReference type="ChEBI" id="CHEBI:43474"/>
        <dbReference type="ChEBI" id="CHEBI:47013"/>
        <dbReference type="ChEBI" id="CHEBI:456216"/>
        <dbReference type="EC" id="7.5.2.7"/>
    </reaction>
</comment>
<comment type="catalytic activity">
    <reaction evidence="1">
        <text>D-galactose(out) + ATP + H2O = D-galactose(in) + ADP + phosphate + H(+)</text>
        <dbReference type="Rhea" id="RHEA:60156"/>
        <dbReference type="ChEBI" id="CHEBI:4139"/>
        <dbReference type="ChEBI" id="CHEBI:15377"/>
        <dbReference type="ChEBI" id="CHEBI:15378"/>
        <dbReference type="ChEBI" id="CHEBI:30616"/>
        <dbReference type="ChEBI" id="CHEBI:43474"/>
        <dbReference type="ChEBI" id="CHEBI:456216"/>
        <dbReference type="EC" id="7.5.2.11"/>
    </reaction>
</comment>
<comment type="subcellular location">
    <subcellularLocation>
        <location evidence="1">Cell inner membrane</location>
        <topology evidence="1">Peripheral membrane protein</topology>
    </subcellularLocation>
</comment>
<comment type="similarity">
    <text evidence="1">Belongs to the ABC transporter superfamily. Carbohydrate importer 2 (CUT2) (TC 3.A.1.2) family.</text>
</comment>
<organism>
    <name type="scientific">Pseudomonas fluorescens (strain ATCC BAA-477 / NRRL B-23932 / Pf-5)</name>
    <dbReference type="NCBI Taxonomy" id="220664"/>
    <lineage>
        <taxon>Bacteria</taxon>
        <taxon>Pseudomonadati</taxon>
        <taxon>Pseudomonadota</taxon>
        <taxon>Gammaproteobacteria</taxon>
        <taxon>Pseudomonadales</taxon>
        <taxon>Pseudomonadaceae</taxon>
        <taxon>Pseudomonas</taxon>
    </lineage>
</organism>